<sequence length="631" mass="71307">MSVGVPVNPSSSSQLPAAPTTTTRRRVADSQEDHSHVNTVGGGNAVVYVPDEEETATSCCGGGGGGGSLSCCPSGSHHNYLVGFLSLRKFRLVWMLMVENKSKWTAGIARNMRSTTNLGRFILTLLSILVVTFFLIVALSGGVGRRRKHVEKHEFVVSIHPRPTIEKIIREDESSNSFQVLVPKTTSIPEIWNQPEVGNYQKCVARPKNQRPIKQTNGYLLVHANGGLNQMRTGICDMVAIAKIMNATLVLPFLDHSSFWSDPSSFKDIFDWKHFIKVLAEDVNIVEYLPQEFASIKPLEKNPVSWSKSSYYRNSISKLLKKHKVIVFNHTDSRLANNSPPPSIQRLRCRANYEALRYSEDIENLSNVLSSRLRENNEPYLALHLRYEKDMLAFTGCNHSLSNEESIDLEKMRFSIPHWKEKVINGTERRLEGNCPMTPREAAVFLKAMGFPSTTNIYIVAGKIYGQNSMTAFHEEFPNVFFHNTLATEEELSTIKPYQNRLAALDYNLALESDIFAYTYDGNMAKAVQGHRRFEGFRKTINPDRQRFVRLIDRLDAGLISWEDFSSKVKKMHQHRIGAPYLRQPGKAGMSPKLEENFYANPLPGCVCDTSEEQTGLNRFERPSLRAQSLR</sequence>
<evidence type="ECO:0000250" key="1">
    <source>
        <dbReference type="UniProtKB" id="Q9H488"/>
    </source>
</evidence>
<evidence type="ECO:0000255" key="2">
    <source>
        <dbReference type="PROSITE-ProRule" id="PRU00498"/>
    </source>
</evidence>
<evidence type="ECO:0000256" key="3">
    <source>
        <dbReference type="SAM" id="MobiDB-lite"/>
    </source>
</evidence>
<evidence type="ECO:0000269" key="4">
    <source>
    </source>
</evidence>
<evidence type="ECO:0000303" key="5">
    <source>
    </source>
</evidence>
<evidence type="ECO:0000305" key="6"/>
<evidence type="ECO:0000312" key="7">
    <source>
        <dbReference type="Araport" id="AT5G01100"/>
    </source>
</evidence>
<evidence type="ECO:0000312" key="8">
    <source>
        <dbReference type="EMBL" id="ARJ31446.1"/>
    </source>
</evidence>
<evidence type="ECO:0000312" key="9">
    <source>
        <dbReference type="EMBL" id="CAB69838.1"/>
    </source>
</evidence>
<comment type="function">
    <text evidence="4">Glycosyltransferase required for normal cell adhesion and cell wall integrity.</text>
</comment>
<comment type="pathway">
    <text evidence="6">Glycan metabolism.</text>
</comment>
<comment type="subcellular location">
    <subcellularLocation>
        <location evidence="4">Golgi apparatus membrane</location>
        <topology evidence="6">Single-pass type II membrane protein</topology>
    </subcellularLocation>
</comment>
<comment type="tissue specificity">
    <text evidence="4">Ubiquitous. Strong expression in young seedlings, particularly at the junction between hypocotyl and root, in emerging cotyledons, and in parts of the roots. Also detected in the inflorescence (sepals, petals, mature pollen and siliques) and rosette leaves.</text>
</comment>
<comment type="disruption phenotype">
    <text evidence="4">Cell dissociation, spontaneous breakage and ectopic organ fusion. Affected embryo development. Increased arabinosyl and decreased galactosyl residues content in the cell wall.</text>
</comment>
<comment type="similarity">
    <text evidence="6">Belongs to the glycosyltransferase GT106 family.</text>
</comment>
<name>FRB1_ARATH</name>
<protein>
    <recommendedName>
        <fullName evidence="5 8">Protein FRIABLE 1</fullName>
        <ecNumber evidence="6">2.4.1.-</ecNumber>
    </recommendedName>
    <alternativeName>
        <fullName evidence="6">O-fucosyltransferase 33</fullName>
        <shortName evidence="6">O-FucT-33</shortName>
    </alternativeName>
    <alternativeName>
        <fullName evidence="6">O-fucosyltransferase family protein</fullName>
    </alternativeName>
</protein>
<organism>
    <name type="scientific">Arabidopsis thaliana</name>
    <name type="common">Mouse-ear cress</name>
    <dbReference type="NCBI Taxonomy" id="3702"/>
    <lineage>
        <taxon>Eukaryota</taxon>
        <taxon>Viridiplantae</taxon>
        <taxon>Streptophyta</taxon>
        <taxon>Embryophyta</taxon>
        <taxon>Tracheophyta</taxon>
        <taxon>Spermatophyta</taxon>
        <taxon>Magnoliopsida</taxon>
        <taxon>eudicotyledons</taxon>
        <taxon>Gunneridae</taxon>
        <taxon>Pentapetalae</taxon>
        <taxon>rosids</taxon>
        <taxon>malvids</taxon>
        <taxon>Brassicales</taxon>
        <taxon>Brassicaceae</taxon>
        <taxon>Camelineae</taxon>
        <taxon>Arabidopsis</taxon>
    </lineage>
</organism>
<dbReference type="EC" id="2.4.1.-" evidence="6"/>
<dbReference type="EMBL" id="KY906082">
    <property type="protein sequence ID" value="ARJ31446.1"/>
    <property type="molecule type" value="mRNA"/>
</dbReference>
<dbReference type="EMBL" id="AL137189">
    <property type="protein sequence ID" value="CAB69838.1"/>
    <property type="molecule type" value="Genomic_DNA"/>
</dbReference>
<dbReference type="EMBL" id="CP002688">
    <property type="protein sequence ID" value="AED90299.1"/>
    <property type="molecule type" value="Genomic_DNA"/>
</dbReference>
<dbReference type="EMBL" id="AK228227">
    <property type="protein sequence ID" value="BAF00177.1"/>
    <property type="molecule type" value="mRNA"/>
</dbReference>
<dbReference type="EMBL" id="BT046173">
    <property type="protein sequence ID" value="ACI49772.1"/>
    <property type="molecule type" value="mRNA"/>
</dbReference>
<dbReference type="PIR" id="T45950">
    <property type="entry name" value="T45950"/>
</dbReference>
<dbReference type="RefSeq" id="NP_195730.1">
    <property type="nucleotide sequence ID" value="NM_120188.4"/>
</dbReference>
<dbReference type="FunCoup" id="Q9LFC6">
    <property type="interactions" value="1"/>
</dbReference>
<dbReference type="STRING" id="3702.Q9LFC6"/>
<dbReference type="GlyCosmos" id="Q9LFC6">
    <property type="glycosylation" value="5 sites, No reported glycans"/>
</dbReference>
<dbReference type="GlyGen" id="Q9LFC6">
    <property type="glycosylation" value="5 sites"/>
</dbReference>
<dbReference type="iPTMnet" id="Q9LFC6"/>
<dbReference type="PaxDb" id="3702-AT5G01100.1"/>
<dbReference type="ProteomicsDB" id="228916"/>
<dbReference type="EnsemblPlants" id="AT5G01100.1">
    <property type="protein sequence ID" value="AT5G01100.1"/>
    <property type="gene ID" value="AT5G01100"/>
</dbReference>
<dbReference type="GeneID" id="831831"/>
<dbReference type="Gramene" id="AT5G01100.1">
    <property type="protein sequence ID" value="AT5G01100.1"/>
    <property type="gene ID" value="AT5G01100"/>
</dbReference>
<dbReference type="KEGG" id="ath:AT5G01100"/>
<dbReference type="Araport" id="AT5G01100"/>
<dbReference type="TAIR" id="AT5G01100">
    <property type="gene designation" value="FRB1"/>
</dbReference>
<dbReference type="eggNOG" id="ENOG502QQ4D">
    <property type="taxonomic scope" value="Eukaryota"/>
</dbReference>
<dbReference type="HOGENOM" id="CLU_018420_7_0_1"/>
<dbReference type="InParanoid" id="Q9LFC6"/>
<dbReference type="OMA" id="PRNNIEK"/>
<dbReference type="PhylomeDB" id="Q9LFC6"/>
<dbReference type="PRO" id="PR:Q9LFC6"/>
<dbReference type="Proteomes" id="UP000006548">
    <property type="component" value="Chromosome 5"/>
</dbReference>
<dbReference type="ExpressionAtlas" id="Q9LFC6">
    <property type="expression patterns" value="baseline and differential"/>
</dbReference>
<dbReference type="GO" id="GO:0005794">
    <property type="term" value="C:Golgi apparatus"/>
    <property type="evidence" value="ECO:0000314"/>
    <property type="project" value="CACAO"/>
</dbReference>
<dbReference type="GO" id="GO:0000139">
    <property type="term" value="C:Golgi membrane"/>
    <property type="evidence" value="ECO:0007669"/>
    <property type="project" value="UniProtKB-SubCell"/>
</dbReference>
<dbReference type="GO" id="GO:0016757">
    <property type="term" value="F:glycosyltransferase activity"/>
    <property type="evidence" value="ECO:0007669"/>
    <property type="project" value="UniProtKB-KW"/>
</dbReference>
<dbReference type="GO" id="GO:0007155">
    <property type="term" value="P:cell adhesion"/>
    <property type="evidence" value="ECO:0000315"/>
    <property type="project" value="UniProtKB"/>
</dbReference>
<dbReference type="GO" id="GO:0071555">
    <property type="term" value="P:cell wall organization"/>
    <property type="evidence" value="ECO:0007669"/>
    <property type="project" value="UniProtKB-KW"/>
</dbReference>
<dbReference type="GO" id="GO:0006004">
    <property type="term" value="P:fucose metabolic process"/>
    <property type="evidence" value="ECO:0007669"/>
    <property type="project" value="UniProtKB-KW"/>
</dbReference>
<dbReference type="GO" id="GO:0080157">
    <property type="term" value="P:regulation of plant-type cell wall organization or biogenesis"/>
    <property type="evidence" value="ECO:0000315"/>
    <property type="project" value="CACAO"/>
</dbReference>
<dbReference type="CDD" id="cd11299">
    <property type="entry name" value="O-FucT_plant"/>
    <property type="match status" value="1"/>
</dbReference>
<dbReference type="InterPro" id="IPR024709">
    <property type="entry name" value="FucosylTrfase_pln"/>
</dbReference>
<dbReference type="InterPro" id="IPR019378">
    <property type="entry name" value="GDP-Fuc_O-FucTrfase"/>
</dbReference>
<dbReference type="PANTHER" id="PTHR31741">
    <property type="entry name" value="OS02G0726500 PROTEIN-RELATED"/>
    <property type="match status" value="1"/>
</dbReference>
<dbReference type="PANTHER" id="PTHR31741:SF80">
    <property type="entry name" value="PROTEIN FRIABLE 1"/>
    <property type="match status" value="1"/>
</dbReference>
<dbReference type="Pfam" id="PF10250">
    <property type="entry name" value="O-FucT"/>
    <property type="match status" value="1"/>
</dbReference>
<reference key="1">
    <citation type="submission" date="2017-04" db="EMBL/GenBank/DDBJ databases">
        <title>Arabidopsis glycosyltransferases: an update.</title>
        <authorList>
            <person name="Zeng W."/>
            <person name="Gluza P."/>
            <person name="Heazlewood J."/>
        </authorList>
    </citation>
    <scope>NUCLEOTIDE SEQUENCE [MRNA]</scope>
    <source>
        <strain>cv. Columbia</strain>
    </source>
</reference>
<reference key="2">
    <citation type="journal article" date="2000" name="Nature">
        <title>Sequence and analysis of chromosome 5 of the plant Arabidopsis thaliana.</title>
        <authorList>
            <person name="Tabata S."/>
            <person name="Kaneko T."/>
            <person name="Nakamura Y."/>
            <person name="Kotani H."/>
            <person name="Kato T."/>
            <person name="Asamizu E."/>
            <person name="Miyajima N."/>
            <person name="Sasamoto S."/>
            <person name="Kimura T."/>
            <person name="Hosouchi T."/>
            <person name="Kawashima K."/>
            <person name="Kohara M."/>
            <person name="Matsumoto M."/>
            <person name="Matsuno A."/>
            <person name="Muraki A."/>
            <person name="Nakayama S."/>
            <person name="Nakazaki N."/>
            <person name="Naruo K."/>
            <person name="Okumura S."/>
            <person name="Shinpo S."/>
            <person name="Takeuchi C."/>
            <person name="Wada T."/>
            <person name="Watanabe A."/>
            <person name="Yamada M."/>
            <person name="Yasuda M."/>
            <person name="Sato S."/>
            <person name="de la Bastide M."/>
            <person name="Huang E."/>
            <person name="Spiegel L."/>
            <person name="Gnoj L."/>
            <person name="O'Shaughnessy A."/>
            <person name="Preston R."/>
            <person name="Habermann K."/>
            <person name="Murray J."/>
            <person name="Johnson D."/>
            <person name="Rohlfing T."/>
            <person name="Nelson J."/>
            <person name="Stoneking T."/>
            <person name="Pepin K."/>
            <person name="Spieth J."/>
            <person name="Sekhon M."/>
            <person name="Armstrong J."/>
            <person name="Becker M."/>
            <person name="Belter E."/>
            <person name="Cordum H."/>
            <person name="Cordes M."/>
            <person name="Courtney L."/>
            <person name="Courtney W."/>
            <person name="Dante M."/>
            <person name="Du H."/>
            <person name="Edwards J."/>
            <person name="Fryman J."/>
            <person name="Haakensen B."/>
            <person name="Lamar E."/>
            <person name="Latreille P."/>
            <person name="Leonard S."/>
            <person name="Meyer R."/>
            <person name="Mulvaney E."/>
            <person name="Ozersky P."/>
            <person name="Riley A."/>
            <person name="Strowmatt C."/>
            <person name="Wagner-McPherson C."/>
            <person name="Wollam A."/>
            <person name="Yoakum M."/>
            <person name="Bell M."/>
            <person name="Dedhia N."/>
            <person name="Parnell L."/>
            <person name="Shah R."/>
            <person name="Rodriguez M."/>
            <person name="Hoon See L."/>
            <person name="Vil D."/>
            <person name="Baker J."/>
            <person name="Kirchoff K."/>
            <person name="Toth K."/>
            <person name="King L."/>
            <person name="Bahret A."/>
            <person name="Miller B."/>
            <person name="Marra M.A."/>
            <person name="Martienssen R."/>
            <person name="McCombie W.R."/>
            <person name="Wilson R.K."/>
            <person name="Murphy G."/>
            <person name="Bancroft I."/>
            <person name="Volckaert G."/>
            <person name="Wambutt R."/>
            <person name="Duesterhoeft A."/>
            <person name="Stiekema W."/>
            <person name="Pohl T."/>
            <person name="Entian K.-D."/>
            <person name="Terryn N."/>
            <person name="Hartley N."/>
            <person name="Bent E."/>
            <person name="Johnson S."/>
            <person name="Langham S.-A."/>
            <person name="McCullagh B."/>
            <person name="Robben J."/>
            <person name="Grymonprez B."/>
            <person name="Zimmermann W."/>
            <person name="Ramsperger U."/>
            <person name="Wedler H."/>
            <person name="Balke K."/>
            <person name="Wedler E."/>
            <person name="Peters S."/>
            <person name="van Staveren M."/>
            <person name="Dirkse W."/>
            <person name="Mooijman P."/>
            <person name="Klein Lankhorst R."/>
            <person name="Weitzenegger T."/>
            <person name="Bothe G."/>
            <person name="Rose M."/>
            <person name="Hauf J."/>
            <person name="Berneiser S."/>
            <person name="Hempel S."/>
            <person name="Feldpausch M."/>
            <person name="Lamberth S."/>
            <person name="Villarroel R."/>
            <person name="Gielen J."/>
            <person name="Ardiles W."/>
            <person name="Bents O."/>
            <person name="Lemcke K."/>
            <person name="Kolesov G."/>
            <person name="Mayer K.F.X."/>
            <person name="Rudd S."/>
            <person name="Schoof H."/>
            <person name="Schueller C."/>
            <person name="Zaccaria P."/>
            <person name="Mewes H.-W."/>
            <person name="Bevan M."/>
            <person name="Fransz P.F."/>
        </authorList>
    </citation>
    <scope>NUCLEOTIDE SEQUENCE [LARGE SCALE GENOMIC DNA]</scope>
    <source>
        <strain>cv. Columbia</strain>
    </source>
</reference>
<reference key="3">
    <citation type="journal article" date="2017" name="Plant J.">
        <title>Araport11: a complete reannotation of the Arabidopsis thaliana reference genome.</title>
        <authorList>
            <person name="Cheng C.Y."/>
            <person name="Krishnakumar V."/>
            <person name="Chan A.P."/>
            <person name="Thibaud-Nissen F."/>
            <person name="Schobel S."/>
            <person name="Town C.D."/>
        </authorList>
    </citation>
    <scope>GENOME REANNOTATION</scope>
    <source>
        <strain>cv. Columbia</strain>
    </source>
</reference>
<reference key="4">
    <citation type="submission" date="2006-07" db="EMBL/GenBank/DDBJ databases">
        <title>Large-scale analysis of RIKEN Arabidopsis full-length (RAFL) cDNAs.</title>
        <authorList>
            <person name="Totoki Y."/>
            <person name="Seki M."/>
            <person name="Ishida J."/>
            <person name="Nakajima M."/>
            <person name="Enju A."/>
            <person name="Kamiya A."/>
            <person name="Narusaka M."/>
            <person name="Shin-i T."/>
            <person name="Nakagawa M."/>
            <person name="Sakamoto N."/>
            <person name="Oishi K."/>
            <person name="Kohara Y."/>
            <person name="Kobayashi M."/>
            <person name="Toyoda A."/>
            <person name="Sakaki Y."/>
            <person name="Sakurai T."/>
            <person name="Iida K."/>
            <person name="Akiyama K."/>
            <person name="Satou M."/>
            <person name="Toyoda T."/>
            <person name="Konagaya A."/>
            <person name="Carninci P."/>
            <person name="Kawai J."/>
            <person name="Hayashizaki Y."/>
            <person name="Shinozaki K."/>
        </authorList>
    </citation>
    <scope>NUCLEOTIDE SEQUENCE [LARGE SCALE MRNA]</scope>
    <source>
        <strain>cv. Columbia</strain>
    </source>
</reference>
<reference key="5">
    <citation type="submission" date="2008-10" db="EMBL/GenBank/DDBJ databases">
        <title>Arabidopsis ORF clones.</title>
        <authorList>
            <person name="de los Reyes C."/>
            <person name="Quan R."/>
            <person name="Chen H."/>
            <person name="Bautista V."/>
            <person name="Kim C.J."/>
            <person name="Ecker J.R."/>
        </authorList>
    </citation>
    <scope>NUCLEOTIDE SEQUENCE [LARGE SCALE MRNA]</scope>
    <source>
        <strain>cv. Columbia</strain>
    </source>
</reference>
<reference key="6">
    <citation type="journal article" date="2012" name="Front. Plant Sci.">
        <title>Plant glycosyltransferases beyond CAZy: a perspective on DUF families.</title>
        <authorList>
            <person name="Hansen S.F."/>
            <person name="Harholt J."/>
            <person name="Oikawa A."/>
            <person name="Scheller H.V."/>
        </authorList>
    </citation>
    <scope>GENE FAMILY</scope>
    <scope>REVIEW</scope>
</reference>
<reference key="7">
    <citation type="journal article" date="2012" name="PLoS ONE">
        <title>The FRIABLE1 gene product affects cell adhesion in Arabidopsis.</title>
        <authorList>
            <person name="Neumetzler L."/>
            <person name="Humphrey T."/>
            <person name="Lumba S."/>
            <person name="Snyder S."/>
            <person name="Yeats T.H."/>
            <person name="Usadel B."/>
            <person name="Vasilevski A."/>
            <person name="Patel J."/>
            <person name="Rose J.K."/>
            <person name="Persson S."/>
            <person name="Bonetta D."/>
        </authorList>
    </citation>
    <scope>GENE FAMILY</scope>
    <scope>FUNCTION</scope>
    <scope>DISRUPTION PHENOTYPE</scope>
    <scope>TISSUE SPECIFICITY</scope>
    <scope>SUBCELLULAR LOCATION</scope>
</reference>
<reference key="8">
    <citation type="journal article" date="2012" name="PLoS ONE">
        <title>Identification of putative rhamnogalacturonan-II specific glycosyltransferases in Arabidopsis using a combination of bioinformatics approaches.</title>
        <authorList>
            <person name="Voxeur A."/>
            <person name="Andre A."/>
            <person name="Breton C."/>
            <person name="Lerouge P."/>
        </authorList>
    </citation>
    <scope>GENE FAMILY</scope>
</reference>
<reference key="9">
    <citation type="journal article" date="2013" name="Plant J.">
        <title>Identification of an additional protein involved in mannan biosynthesis.</title>
        <authorList>
            <person name="Wang Y."/>
            <person name="Mortimer J.C."/>
            <person name="Davis J."/>
            <person name="Dupree P."/>
            <person name="Keegstra K."/>
        </authorList>
    </citation>
    <scope>GENE FAMILY</scope>
</reference>
<reference key="10">
    <citation type="journal article" date="2014" name="Plant J.">
        <title>The plant glycosyltransferase clone collection for functional genomics.</title>
        <authorList>
            <person name="Lao J."/>
            <person name="Oikawa A."/>
            <person name="Bromley J.R."/>
            <person name="McInerney P."/>
            <person name="Suttangkakul A."/>
            <person name="Smith-Moritz A.M."/>
            <person name="Plahar H."/>
            <person name="Chiu T.-Y."/>
            <person name="Gonzalez Fernandez-Nino S.M.G."/>
            <person name="Ebert B."/>
            <person name="Yang F."/>
            <person name="Christiansen K.M."/>
            <person name="Hansen S.F."/>
            <person name="Stonebloom S."/>
            <person name="Adams P.D."/>
            <person name="Ronald P.C."/>
            <person name="Hillson N.J."/>
            <person name="Hadi M.Z."/>
            <person name="Vega-Sanchez M.E."/>
            <person name="Loque D."/>
            <person name="Scheller H.V."/>
            <person name="Heazlewood J.L."/>
        </authorList>
    </citation>
    <scope>WEB RESOURCE</scope>
</reference>
<keyword id="KW-0119">Carbohydrate metabolism</keyword>
<keyword id="KW-0130">Cell adhesion</keyword>
<keyword id="KW-0961">Cell wall biogenesis/degradation</keyword>
<keyword id="KW-0294">Fucose metabolism</keyword>
<keyword id="KW-0325">Glycoprotein</keyword>
<keyword id="KW-0328">Glycosyltransferase</keyword>
<keyword id="KW-0333">Golgi apparatus</keyword>
<keyword id="KW-0472">Membrane</keyword>
<keyword id="KW-1185">Reference proteome</keyword>
<keyword id="KW-0735">Signal-anchor</keyword>
<keyword id="KW-0808">Transferase</keyword>
<keyword id="KW-0812">Transmembrane</keyword>
<keyword id="KW-1133">Transmembrane helix</keyword>
<proteinExistence type="evidence at transcript level"/>
<gene>
    <name evidence="5 8" type="primary">FRB1</name>
    <name evidence="6" type="synonym">OFUT33</name>
    <name evidence="7" type="ordered locus">At5g01100</name>
    <name evidence="9" type="ORF">F7J8.80</name>
</gene>
<accession>Q9LFC6</accession>
<accession>A0A1W6AK54</accession>
<accession>Q0WRS2</accession>
<feature type="chain" id="PRO_0000442095" description="Protein FRIABLE 1">
    <location>
        <begin position="1"/>
        <end position="631"/>
    </location>
</feature>
<feature type="topological domain" description="Cytoplasmic" evidence="6">
    <location>
        <begin position="1"/>
        <end position="120"/>
    </location>
</feature>
<feature type="transmembrane region" description="Helical; Signal-anchor for type II membrane protein" evidence="6">
    <location>
        <begin position="121"/>
        <end position="141"/>
    </location>
</feature>
<feature type="topological domain" description="Lumenal" evidence="6">
    <location>
        <begin position="142"/>
        <end position="631"/>
    </location>
</feature>
<feature type="region of interest" description="Disordered" evidence="3">
    <location>
        <begin position="1"/>
        <end position="36"/>
    </location>
</feature>
<feature type="compositionally biased region" description="Low complexity" evidence="3">
    <location>
        <begin position="1"/>
        <end position="13"/>
    </location>
</feature>
<feature type="compositionally biased region" description="Basic and acidic residues" evidence="3">
    <location>
        <begin position="26"/>
        <end position="36"/>
    </location>
</feature>
<feature type="binding site" evidence="1">
    <location>
        <begin position="384"/>
        <end position="386"/>
    </location>
    <ligand>
        <name>substrate</name>
    </ligand>
</feature>
<feature type="glycosylation site" description="N-linked (GlcNAc...) asparagine" evidence="2">
    <location>
        <position position="246"/>
    </location>
</feature>
<feature type="glycosylation site" description="N-linked (GlcNAc...) asparagine" evidence="2">
    <location>
        <position position="329"/>
    </location>
</feature>
<feature type="glycosylation site" description="N-linked (GlcNAc...) asparagine" evidence="2">
    <location>
        <position position="364"/>
    </location>
</feature>
<feature type="glycosylation site" description="N-linked (GlcNAc...) asparagine" evidence="2">
    <location>
        <position position="398"/>
    </location>
</feature>
<feature type="glycosylation site" description="N-linked (GlcNAc...) asparagine" evidence="2">
    <location>
        <position position="425"/>
    </location>
</feature>
<feature type="sequence conflict" description="In Ref. 4; BAF00177." evidence="6" ref="4">
    <original>L</original>
    <variation>P</variation>
    <location>
        <position position="356"/>
    </location>
</feature>
<feature type="sequence conflict" description="In Ref. 1; ARJ31446." evidence="6" ref="1">
    <original>R</original>
    <variation>K</variation>
    <location>
        <position position="550"/>
    </location>
</feature>